<proteinExistence type="inferred from homology"/>
<name>GLPK_BURCM</name>
<keyword id="KW-0067">ATP-binding</keyword>
<keyword id="KW-0319">Glycerol metabolism</keyword>
<keyword id="KW-0418">Kinase</keyword>
<keyword id="KW-0547">Nucleotide-binding</keyword>
<keyword id="KW-0808">Transferase</keyword>
<feature type="chain" id="PRO_1000020711" description="Glycerol kinase">
    <location>
        <begin position="1"/>
        <end position="500"/>
    </location>
</feature>
<feature type="binding site" evidence="1">
    <location>
        <position position="13"/>
    </location>
    <ligand>
        <name>ADP</name>
        <dbReference type="ChEBI" id="CHEBI:456216"/>
    </ligand>
</feature>
<feature type="binding site" evidence="1">
    <location>
        <position position="13"/>
    </location>
    <ligand>
        <name>ATP</name>
        <dbReference type="ChEBI" id="CHEBI:30616"/>
    </ligand>
</feature>
<feature type="binding site" evidence="1">
    <location>
        <position position="13"/>
    </location>
    <ligand>
        <name>sn-glycerol 3-phosphate</name>
        <dbReference type="ChEBI" id="CHEBI:57597"/>
    </ligand>
</feature>
<feature type="binding site" evidence="1">
    <location>
        <position position="14"/>
    </location>
    <ligand>
        <name>ATP</name>
        <dbReference type="ChEBI" id="CHEBI:30616"/>
    </ligand>
</feature>
<feature type="binding site" evidence="1">
    <location>
        <position position="15"/>
    </location>
    <ligand>
        <name>ATP</name>
        <dbReference type="ChEBI" id="CHEBI:30616"/>
    </ligand>
</feature>
<feature type="binding site" evidence="1">
    <location>
        <position position="17"/>
    </location>
    <ligand>
        <name>ADP</name>
        <dbReference type="ChEBI" id="CHEBI:456216"/>
    </ligand>
</feature>
<feature type="binding site" evidence="1">
    <location>
        <position position="83"/>
    </location>
    <ligand>
        <name>glycerol</name>
        <dbReference type="ChEBI" id="CHEBI:17754"/>
    </ligand>
</feature>
<feature type="binding site" evidence="1">
    <location>
        <position position="83"/>
    </location>
    <ligand>
        <name>sn-glycerol 3-phosphate</name>
        <dbReference type="ChEBI" id="CHEBI:57597"/>
    </ligand>
</feature>
<feature type="binding site" evidence="1">
    <location>
        <position position="84"/>
    </location>
    <ligand>
        <name>glycerol</name>
        <dbReference type="ChEBI" id="CHEBI:17754"/>
    </ligand>
</feature>
<feature type="binding site" evidence="1">
    <location>
        <position position="84"/>
    </location>
    <ligand>
        <name>sn-glycerol 3-phosphate</name>
        <dbReference type="ChEBI" id="CHEBI:57597"/>
    </ligand>
</feature>
<feature type="binding site" evidence="1">
    <location>
        <position position="135"/>
    </location>
    <ligand>
        <name>glycerol</name>
        <dbReference type="ChEBI" id="CHEBI:17754"/>
    </ligand>
</feature>
<feature type="binding site" evidence="1">
    <location>
        <position position="135"/>
    </location>
    <ligand>
        <name>sn-glycerol 3-phosphate</name>
        <dbReference type="ChEBI" id="CHEBI:57597"/>
    </ligand>
</feature>
<feature type="binding site" evidence="1">
    <location>
        <position position="244"/>
    </location>
    <ligand>
        <name>glycerol</name>
        <dbReference type="ChEBI" id="CHEBI:17754"/>
    </ligand>
</feature>
<feature type="binding site" evidence="1">
    <location>
        <position position="244"/>
    </location>
    <ligand>
        <name>sn-glycerol 3-phosphate</name>
        <dbReference type="ChEBI" id="CHEBI:57597"/>
    </ligand>
</feature>
<feature type="binding site" evidence="1">
    <location>
        <position position="245"/>
    </location>
    <ligand>
        <name>glycerol</name>
        <dbReference type="ChEBI" id="CHEBI:17754"/>
    </ligand>
</feature>
<feature type="binding site" evidence="1">
    <location>
        <position position="266"/>
    </location>
    <ligand>
        <name>ADP</name>
        <dbReference type="ChEBI" id="CHEBI:456216"/>
    </ligand>
</feature>
<feature type="binding site" evidence="1">
    <location>
        <position position="266"/>
    </location>
    <ligand>
        <name>ATP</name>
        <dbReference type="ChEBI" id="CHEBI:30616"/>
    </ligand>
</feature>
<feature type="binding site" evidence="1">
    <location>
        <position position="309"/>
    </location>
    <ligand>
        <name>ADP</name>
        <dbReference type="ChEBI" id="CHEBI:456216"/>
    </ligand>
</feature>
<feature type="binding site" evidence="1">
    <location>
        <position position="309"/>
    </location>
    <ligand>
        <name>ATP</name>
        <dbReference type="ChEBI" id="CHEBI:30616"/>
    </ligand>
</feature>
<feature type="binding site" evidence="1">
    <location>
        <position position="313"/>
    </location>
    <ligand>
        <name>ATP</name>
        <dbReference type="ChEBI" id="CHEBI:30616"/>
    </ligand>
</feature>
<feature type="binding site" evidence="1">
    <location>
        <position position="410"/>
    </location>
    <ligand>
        <name>ADP</name>
        <dbReference type="ChEBI" id="CHEBI:456216"/>
    </ligand>
</feature>
<feature type="binding site" evidence="1">
    <location>
        <position position="410"/>
    </location>
    <ligand>
        <name>ATP</name>
        <dbReference type="ChEBI" id="CHEBI:30616"/>
    </ligand>
</feature>
<feature type="binding site" evidence="1">
    <location>
        <position position="414"/>
    </location>
    <ligand>
        <name>ADP</name>
        <dbReference type="ChEBI" id="CHEBI:456216"/>
    </ligand>
</feature>
<reference key="1">
    <citation type="submission" date="2006-08" db="EMBL/GenBank/DDBJ databases">
        <title>Complete sequence of chromosome 1 of Burkholderia cepacia AMMD.</title>
        <authorList>
            <person name="Copeland A."/>
            <person name="Lucas S."/>
            <person name="Lapidus A."/>
            <person name="Barry K."/>
            <person name="Detter J.C."/>
            <person name="Glavina del Rio T."/>
            <person name="Hammon N."/>
            <person name="Israni S."/>
            <person name="Pitluck S."/>
            <person name="Bruce D."/>
            <person name="Chain P."/>
            <person name="Malfatti S."/>
            <person name="Shin M."/>
            <person name="Vergez L."/>
            <person name="Schmutz J."/>
            <person name="Larimer F."/>
            <person name="Land M."/>
            <person name="Hauser L."/>
            <person name="Kyrpides N."/>
            <person name="Kim E."/>
            <person name="Parke J."/>
            <person name="Coenye T."/>
            <person name="Konstantinidis K."/>
            <person name="Ramette A."/>
            <person name="Tiedje J."/>
            <person name="Richardson P."/>
        </authorList>
    </citation>
    <scope>NUCLEOTIDE SEQUENCE [LARGE SCALE GENOMIC DNA]</scope>
    <source>
        <strain>ATCC BAA-244 / DSM 16087 / CCUG 44356 / LMG 19182 / AMMD</strain>
    </source>
</reference>
<sequence length="500" mass="54649">MQDQYILALDQGTTSSRAMLFDRQGNIVSIAQKEFEQIYPQPGWVEHDPQEIWSTQAGVAAEAVTRTGLNGTSIAAIGITNQRETTIVWDRETGQPVYNAIVWQDRRTADFCDSLKKQGLEAKVRAKTGLPIDSYFSATKIRWILDNVPGARDKARQGKLAFGTVDSWLVWNFTKHELHVTDVTNASRTMLFNIHTREWDSELLELLDIPRSMLPDVKASSEIYGHTKTTVFASKIPLAGIAGDQHAALFGQMCTTSGMVKNTYGTGCFLMMNTGDKPIESKNNLVTTIAWQIGDDVQYALEGSIFIAGAVVQWLRDGVGIIKTAAEIEALAASVPHTDGVYLVPAFAGLGAPHWNARARGSVFGVTRGTTSAHLARAALDAIAYQSLDVLAAMEADSGISIGELRVDGGASANDLLMQFQADLLGVDAVRPQITETTALGAAYLAGLAIGYWKNLDEVRSQWQLDRRFAPSMPKEQVEQRMAGWQRAVRAAKAWADDTQ</sequence>
<dbReference type="EC" id="2.7.1.30" evidence="1"/>
<dbReference type="EMBL" id="CP000440">
    <property type="protein sequence ID" value="ABI88287.1"/>
    <property type="molecule type" value="Genomic_DNA"/>
</dbReference>
<dbReference type="RefSeq" id="WP_011657858.1">
    <property type="nucleotide sequence ID" value="NZ_CP009798.1"/>
</dbReference>
<dbReference type="SMR" id="Q0BC36"/>
<dbReference type="GeneID" id="93085068"/>
<dbReference type="KEGG" id="bam:Bamb_2731"/>
<dbReference type="PATRIC" id="fig|339670.21.peg.2163"/>
<dbReference type="eggNOG" id="COG0554">
    <property type="taxonomic scope" value="Bacteria"/>
</dbReference>
<dbReference type="UniPathway" id="UPA00618">
    <property type="reaction ID" value="UER00672"/>
</dbReference>
<dbReference type="Proteomes" id="UP000000662">
    <property type="component" value="Chromosome 1"/>
</dbReference>
<dbReference type="GO" id="GO:0005829">
    <property type="term" value="C:cytosol"/>
    <property type="evidence" value="ECO:0007669"/>
    <property type="project" value="TreeGrafter"/>
</dbReference>
<dbReference type="GO" id="GO:0005524">
    <property type="term" value="F:ATP binding"/>
    <property type="evidence" value="ECO:0007669"/>
    <property type="project" value="UniProtKB-UniRule"/>
</dbReference>
<dbReference type="GO" id="GO:0004370">
    <property type="term" value="F:glycerol kinase activity"/>
    <property type="evidence" value="ECO:0000250"/>
    <property type="project" value="UniProtKB"/>
</dbReference>
<dbReference type="GO" id="GO:0019563">
    <property type="term" value="P:glycerol catabolic process"/>
    <property type="evidence" value="ECO:0007669"/>
    <property type="project" value="UniProtKB-UniRule"/>
</dbReference>
<dbReference type="GO" id="GO:0006071">
    <property type="term" value="P:glycerol metabolic process"/>
    <property type="evidence" value="ECO:0000250"/>
    <property type="project" value="UniProtKB"/>
</dbReference>
<dbReference type="GO" id="GO:0006072">
    <property type="term" value="P:glycerol-3-phosphate metabolic process"/>
    <property type="evidence" value="ECO:0007669"/>
    <property type="project" value="InterPro"/>
</dbReference>
<dbReference type="CDD" id="cd07786">
    <property type="entry name" value="FGGY_EcGK_like"/>
    <property type="match status" value="1"/>
</dbReference>
<dbReference type="FunFam" id="3.30.420.40:FF:000007">
    <property type="entry name" value="Glycerol kinase"/>
    <property type="match status" value="1"/>
</dbReference>
<dbReference type="FunFam" id="3.30.420.40:FF:000008">
    <property type="entry name" value="Glycerol kinase"/>
    <property type="match status" value="1"/>
</dbReference>
<dbReference type="Gene3D" id="3.30.420.40">
    <property type="match status" value="2"/>
</dbReference>
<dbReference type="HAMAP" id="MF_00186">
    <property type="entry name" value="Glycerol_kin"/>
    <property type="match status" value="1"/>
</dbReference>
<dbReference type="InterPro" id="IPR043129">
    <property type="entry name" value="ATPase_NBD"/>
</dbReference>
<dbReference type="InterPro" id="IPR000577">
    <property type="entry name" value="Carb_kinase_FGGY"/>
</dbReference>
<dbReference type="InterPro" id="IPR018483">
    <property type="entry name" value="Carb_kinase_FGGY_CS"/>
</dbReference>
<dbReference type="InterPro" id="IPR018485">
    <property type="entry name" value="FGGY_C"/>
</dbReference>
<dbReference type="InterPro" id="IPR018484">
    <property type="entry name" value="FGGY_N"/>
</dbReference>
<dbReference type="InterPro" id="IPR005999">
    <property type="entry name" value="Glycerol_kin"/>
</dbReference>
<dbReference type="NCBIfam" id="TIGR01311">
    <property type="entry name" value="glycerol_kin"/>
    <property type="match status" value="1"/>
</dbReference>
<dbReference type="NCBIfam" id="NF000756">
    <property type="entry name" value="PRK00047.1"/>
    <property type="match status" value="1"/>
</dbReference>
<dbReference type="PANTHER" id="PTHR10196:SF69">
    <property type="entry name" value="GLYCEROL KINASE"/>
    <property type="match status" value="1"/>
</dbReference>
<dbReference type="PANTHER" id="PTHR10196">
    <property type="entry name" value="SUGAR KINASE"/>
    <property type="match status" value="1"/>
</dbReference>
<dbReference type="Pfam" id="PF02782">
    <property type="entry name" value="FGGY_C"/>
    <property type="match status" value="1"/>
</dbReference>
<dbReference type="Pfam" id="PF00370">
    <property type="entry name" value="FGGY_N"/>
    <property type="match status" value="1"/>
</dbReference>
<dbReference type="PIRSF" id="PIRSF000538">
    <property type="entry name" value="GlpK"/>
    <property type="match status" value="1"/>
</dbReference>
<dbReference type="SUPFAM" id="SSF53067">
    <property type="entry name" value="Actin-like ATPase domain"/>
    <property type="match status" value="2"/>
</dbReference>
<dbReference type="PROSITE" id="PS00933">
    <property type="entry name" value="FGGY_KINASES_1"/>
    <property type="match status" value="1"/>
</dbReference>
<dbReference type="PROSITE" id="PS00445">
    <property type="entry name" value="FGGY_KINASES_2"/>
    <property type="match status" value="1"/>
</dbReference>
<accession>Q0BC36</accession>
<protein>
    <recommendedName>
        <fullName evidence="1">Glycerol kinase</fullName>
        <ecNumber evidence="1">2.7.1.30</ecNumber>
    </recommendedName>
    <alternativeName>
        <fullName evidence="1">ATP:glycerol 3-phosphotransferase</fullName>
    </alternativeName>
    <alternativeName>
        <fullName evidence="1">Glycerokinase</fullName>
        <shortName evidence="1">GK</shortName>
    </alternativeName>
</protein>
<evidence type="ECO:0000255" key="1">
    <source>
        <dbReference type="HAMAP-Rule" id="MF_00186"/>
    </source>
</evidence>
<organism>
    <name type="scientific">Burkholderia ambifaria (strain ATCC BAA-244 / DSM 16087 / CCUG 44356 / LMG 19182 / AMMD)</name>
    <name type="common">Burkholderia cepacia (strain AMMD)</name>
    <dbReference type="NCBI Taxonomy" id="339670"/>
    <lineage>
        <taxon>Bacteria</taxon>
        <taxon>Pseudomonadati</taxon>
        <taxon>Pseudomonadota</taxon>
        <taxon>Betaproteobacteria</taxon>
        <taxon>Burkholderiales</taxon>
        <taxon>Burkholderiaceae</taxon>
        <taxon>Burkholderia</taxon>
        <taxon>Burkholderia cepacia complex</taxon>
    </lineage>
</organism>
<gene>
    <name evidence="1" type="primary">glpK</name>
    <name type="ordered locus">Bamb_2731</name>
</gene>
<comment type="function">
    <text evidence="1">Key enzyme in the regulation of glycerol uptake and metabolism. Catalyzes the phosphorylation of glycerol to yield sn-glycerol 3-phosphate.</text>
</comment>
<comment type="catalytic activity">
    <reaction evidence="1">
        <text>glycerol + ATP = sn-glycerol 3-phosphate + ADP + H(+)</text>
        <dbReference type="Rhea" id="RHEA:21644"/>
        <dbReference type="ChEBI" id="CHEBI:15378"/>
        <dbReference type="ChEBI" id="CHEBI:17754"/>
        <dbReference type="ChEBI" id="CHEBI:30616"/>
        <dbReference type="ChEBI" id="CHEBI:57597"/>
        <dbReference type="ChEBI" id="CHEBI:456216"/>
        <dbReference type="EC" id="2.7.1.30"/>
    </reaction>
</comment>
<comment type="activity regulation">
    <text evidence="1">Inhibited by fructose 1,6-bisphosphate (FBP).</text>
</comment>
<comment type="pathway">
    <text evidence="1">Polyol metabolism; glycerol degradation via glycerol kinase pathway; sn-glycerol 3-phosphate from glycerol: step 1/1.</text>
</comment>
<comment type="similarity">
    <text evidence="1">Belongs to the FGGY kinase family.</text>
</comment>